<protein>
    <recommendedName>
        <fullName>Histone H4</fullName>
    </recommendedName>
</protein>
<organism>
    <name type="scientific">Eucalyptus globulus</name>
    <name type="common">Tasmanian blue gum</name>
    <dbReference type="NCBI Taxonomy" id="34317"/>
    <lineage>
        <taxon>Eukaryota</taxon>
        <taxon>Viridiplantae</taxon>
        <taxon>Streptophyta</taxon>
        <taxon>Embryophyta</taxon>
        <taxon>Tracheophyta</taxon>
        <taxon>Spermatophyta</taxon>
        <taxon>Magnoliopsida</taxon>
        <taxon>eudicotyledons</taxon>
        <taxon>Gunneridae</taxon>
        <taxon>Pentapetalae</taxon>
        <taxon>rosids</taxon>
        <taxon>malvids</taxon>
        <taxon>Myrtales</taxon>
        <taxon>Myrtaceae</taxon>
        <taxon>Myrtoideae</taxon>
        <taxon>Eucalypteae</taxon>
        <taxon>Eucalyptus</taxon>
    </lineage>
</organism>
<reference key="1">
    <citation type="submission" date="2003-03" db="EMBL/GenBank/DDBJ databases">
        <title>A histone H4 ortholog from Eucalyptus globulus.</title>
        <authorList>
            <person name="Watson J.M."/>
            <person name="Brill E.M."/>
        </authorList>
    </citation>
    <scope>NUCLEOTIDE SEQUENCE [MRNA]</scope>
</reference>
<accession>Q6WZ83</accession>
<feature type="initiator methionine" description="Removed" evidence="1">
    <location>
        <position position="1"/>
    </location>
</feature>
<feature type="chain" id="PRO_0000158316" description="Histone H4">
    <location>
        <begin position="2"/>
        <end position="103"/>
    </location>
</feature>
<feature type="DNA-binding region">
    <location>
        <begin position="17"/>
        <end position="21"/>
    </location>
</feature>
<feature type="region of interest" description="Disordered" evidence="2">
    <location>
        <begin position="1"/>
        <end position="20"/>
    </location>
</feature>
<feature type="compositionally biased region" description="Gly residues" evidence="2">
    <location>
        <begin position="1"/>
        <end position="14"/>
    </location>
</feature>
<feature type="modified residue" description="N-acetylserine" evidence="1">
    <location>
        <position position="2"/>
    </location>
</feature>
<feature type="modified residue" description="N6-acetyllysine" evidence="1">
    <location>
        <position position="17"/>
    </location>
</feature>
<feature type="modified residue" description="N6-methyllysine" evidence="1">
    <location>
        <position position="21"/>
    </location>
</feature>
<evidence type="ECO:0000250" key="1"/>
<evidence type="ECO:0000256" key="2">
    <source>
        <dbReference type="SAM" id="MobiDB-lite"/>
    </source>
</evidence>
<evidence type="ECO:0000305" key="3"/>
<proteinExistence type="inferred from homology"/>
<sequence>MSGRGKGGKGLGKGGAKRHRKVLRDNIQGITKPAIRRLARRGGVKRISGLIYEETRGVLKIFLENVIRDAVTYTEHARRKTVTAMDVVYALKRQGRTLYGFGG</sequence>
<comment type="function">
    <text>Core component of nucleosome. Nucleosomes wrap and compact DNA into chromatin, limiting DNA accessibility to the cellular machineries which require DNA as a template. Histones thereby play a central role in transcription regulation, DNA repair, DNA replication and chromosomal stability. DNA accessibility is regulated via a complex set of post-translational modifications of histones, also called histone code, and nucleosome remodeling.</text>
</comment>
<comment type="subunit">
    <text>The nucleosome is a histone octamer containing two molecules each of H2A, H2B, H3 and H4 assembled in one H3-H4 heterotetramer and two H2A-H2B heterodimers. The octamer wraps approximately 147 bp of DNA.</text>
</comment>
<comment type="subcellular location">
    <subcellularLocation>
        <location evidence="1">Nucleus</location>
    </subcellularLocation>
    <subcellularLocation>
        <location evidence="1">Chromosome</location>
    </subcellularLocation>
</comment>
<comment type="similarity">
    <text evidence="3">Belongs to the histone H4 family.</text>
</comment>
<keyword id="KW-0007">Acetylation</keyword>
<keyword id="KW-0158">Chromosome</keyword>
<keyword id="KW-0238">DNA-binding</keyword>
<keyword id="KW-0488">Methylation</keyword>
<keyword id="KW-0544">Nucleosome core</keyword>
<keyword id="KW-0539">Nucleus</keyword>
<name>H4_EUCGL</name>
<dbReference type="EMBL" id="AY263810">
    <property type="protein sequence ID" value="AAP33088.1"/>
    <property type="molecule type" value="mRNA"/>
</dbReference>
<dbReference type="SMR" id="Q6WZ83"/>
<dbReference type="GO" id="GO:0000786">
    <property type="term" value="C:nucleosome"/>
    <property type="evidence" value="ECO:0007669"/>
    <property type="project" value="UniProtKB-KW"/>
</dbReference>
<dbReference type="GO" id="GO:0005634">
    <property type="term" value="C:nucleus"/>
    <property type="evidence" value="ECO:0007669"/>
    <property type="project" value="UniProtKB-SubCell"/>
</dbReference>
<dbReference type="GO" id="GO:0003677">
    <property type="term" value="F:DNA binding"/>
    <property type="evidence" value="ECO:0007669"/>
    <property type="project" value="UniProtKB-KW"/>
</dbReference>
<dbReference type="GO" id="GO:0046982">
    <property type="term" value="F:protein heterodimerization activity"/>
    <property type="evidence" value="ECO:0007669"/>
    <property type="project" value="InterPro"/>
</dbReference>
<dbReference type="GO" id="GO:0030527">
    <property type="term" value="F:structural constituent of chromatin"/>
    <property type="evidence" value="ECO:0007669"/>
    <property type="project" value="InterPro"/>
</dbReference>
<dbReference type="CDD" id="cd22912">
    <property type="entry name" value="HFD_H4"/>
    <property type="match status" value="1"/>
</dbReference>
<dbReference type="FunFam" id="1.10.20.10:FF:000002">
    <property type="entry name" value="Histone H4"/>
    <property type="match status" value="1"/>
</dbReference>
<dbReference type="Gene3D" id="1.10.20.10">
    <property type="entry name" value="Histone, subunit A"/>
    <property type="match status" value="1"/>
</dbReference>
<dbReference type="InterPro" id="IPR035425">
    <property type="entry name" value="CENP-T/H4_C"/>
</dbReference>
<dbReference type="InterPro" id="IPR009072">
    <property type="entry name" value="Histone-fold"/>
</dbReference>
<dbReference type="InterPro" id="IPR001951">
    <property type="entry name" value="Histone_H4"/>
</dbReference>
<dbReference type="InterPro" id="IPR019809">
    <property type="entry name" value="Histone_H4_CS"/>
</dbReference>
<dbReference type="PANTHER" id="PTHR10484">
    <property type="entry name" value="HISTONE H4"/>
    <property type="match status" value="1"/>
</dbReference>
<dbReference type="Pfam" id="PF15511">
    <property type="entry name" value="CENP-T_C"/>
    <property type="match status" value="1"/>
</dbReference>
<dbReference type="PRINTS" id="PR00623">
    <property type="entry name" value="HISTONEH4"/>
</dbReference>
<dbReference type="SMART" id="SM00417">
    <property type="entry name" value="H4"/>
    <property type="match status" value="1"/>
</dbReference>
<dbReference type="SUPFAM" id="SSF47113">
    <property type="entry name" value="Histone-fold"/>
    <property type="match status" value="1"/>
</dbReference>
<dbReference type="PROSITE" id="PS00047">
    <property type="entry name" value="HISTONE_H4"/>
    <property type="match status" value="1"/>
</dbReference>